<organism>
    <name type="scientific">Streptococcus pyogenes serotype M28 (strain MGAS6180)</name>
    <dbReference type="NCBI Taxonomy" id="319701"/>
    <lineage>
        <taxon>Bacteria</taxon>
        <taxon>Bacillati</taxon>
        <taxon>Bacillota</taxon>
        <taxon>Bacilli</taxon>
        <taxon>Lactobacillales</taxon>
        <taxon>Streptococcaceae</taxon>
        <taxon>Streptococcus</taxon>
    </lineage>
</organism>
<reference key="1">
    <citation type="journal article" date="2005" name="J. Infect. Dis.">
        <title>Genome sequence of a serotype M28 strain of group A Streptococcus: potential new insights into puerperal sepsis and bacterial disease specificity.</title>
        <authorList>
            <person name="Green N.M."/>
            <person name="Zhang S."/>
            <person name="Porcella S.F."/>
            <person name="Nagiec M.J."/>
            <person name="Barbian K.D."/>
            <person name="Beres S.B."/>
            <person name="Lefebvre R.B."/>
            <person name="Musser J.M."/>
        </authorList>
    </citation>
    <scope>NUCLEOTIDE SEQUENCE [LARGE SCALE GENOMIC DNA]</scope>
    <source>
        <strain>MGAS6180</strain>
    </source>
</reference>
<evidence type="ECO:0000255" key="1">
    <source>
        <dbReference type="HAMAP-Rule" id="MF_01363"/>
    </source>
</evidence>
<evidence type="ECO:0000305" key="2"/>
<feature type="chain" id="PRO_0000269398" description="Large ribosomal subunit protein bL21">
    <location>
        <begin position="1"/>
        <end position="104"/>
    </location>
</feature>
<gene>
    <name evidence="1" type="primary">rplU</name>
    <name type="ordered locus">M28_Spy0613</name>
</gene>
<comment type="function">
    <text evidence="1">This protein binds to 23S rRNA in the presence of protein L20.</text>
</comment>
<comment type="subunit">
    <text evidence="1">Part of the 50S ribosomal subunit. Contacts protein L20.</text>
</comment>
<comment type="similarity">
    <text evidence="1">Belongs to the bacterial ribosomal protein bL21 family.</text>
</comment>
<accession>Q48U79</accession>
<dbReference type="EMBL" id="CP000056">
    <property type="protein sequence ID" value="AAX71727.1"/>
    <property type="molecule type" value="Genomic_DNA"/>
</dbReference>
<dbReference type="RefSeq" id="WP_002985116.1">
    <property type="nucleotide sequence ID" value="NC_007296.2"/>
</dbReference>
<dbReference type="SMR" id="Q48U79"/>
<dbReference type="GeneID" id="83690429"/>
<dbReference type="KEGG" id="spb:M28_Spy0613"/>
<dbReference type="HOGENOM" id="CLU_061463_3_1_9"/>
<dbReference type="GO" id="GO:0005737">
    <property type="term" value="C:cytoplasm"/>
    <property type="evidence" value="ECO:0007669"/>
    <property type="project" value="UniProtKB-ARBA"/>
</dbReference>
<dbReference type="GO" id="GO:1990904">
    <property type="term" value="C:ribonucleoprotein complex"/>
    <property type="evidence" value="ECO:0007669"/>
    <property type="project" value="UniProtKB-KW"/>
</dbReference>
<dbReference type="GO" id="GO:0005840">
    <property type="term" value="C:ribosome"/>
    <property type="evidence" value="ECO:0007669"/>
    <property type="project" value="UniProtKB-KW"/>
</dbReference>
<dbReference type="GO" id="GO:0019843">
    <property type="term" value="F:rRNA binding"/>
    <property type="evidence" value="ECO:0007669"/>
    <property type="project" value="UniProtKB-UniRule"/>
</dbReference>
<dbReference type="GO" id="GO:0003735">
    <property type="term" value="F:structural constituent of ribosome"/>
    <property type="evidence" value="ECO:0007669"/>
    <property type="project" value="InterPro"/>
</dbReference>
<dbReference type="GO" id="GO:0006412">
    <property type="term" value="P:translation"/>
    <property type="evidence" value="ECO:0007669"/>
    <property type="project" value="UniProtKB-UniRule"/>
</dbReference>
<dbReference type="HAMAP" id="MF_01363">
    <property type="entry name" value="Ribosomal_bL21"/>
    <property type="match status" value="1"/>
</dbReference>
<dbReference type="InterPro" id="IPR028909">
    <property type="entry name" value="bL21-like"/>
</dbReference>
<dbReference type="InterPro" id="IPR036164">
    <property type="entry name" value="bL21-like_sf"/>
</dbReference>
<dbReference type="InterPro" id="IPR001787">
    <property type="entry name" value="Ribosomal_bL21"/>
</dbReference>
<dbReference type="InterPro" id="IPR018258">
    <property type="entry name" value="Ribosomal_bL21_CS"/>
</dbReference>
<dbReference type="NCBIfam" id="TIGR00061">
    <property type="entry name" value="L21"/>
    <property type="match status" value="1"/>
</dbReference>
<dbReference type="PANTHER" id="PTHR21349">
    <property type="entry name" value="50S RIBOSOMAL PROTEIN L21"/>
    <property type="match status" value="1"/>
</dbReference>
<dbReference type="PANTHER" id="PTHR21349:SF0">
    <property type="entry name" value="LARGE RIBOSOMAL SUBUNIT PROTEIN BL21M"/>
    <property type="match status" value="1"/>
</dbReference>
<dbReference type="Pfam" id="PF00829">
    <property type="entry name" value="Ribosomal_L21p"/>
    <property type="match status" value="1"/>
</dbReference>
<dbReference type="SUPFAM" id="SSF141091">
    <property type="entry name" value="L21p-like"/>
    <property type="match status" value="1"/>
</dbReference>
<dbReference type="PROSITE" id="PS01169">
    <property type="entry name" value="RIBOSOMAL_L21"/>
    <property type="match status" value="1"/>
</dbReference>
<proteinExistence type="inferred from homology"/>
<keyword id="KW-0687">Ribonucleoprotein</keyword>
<keyword id="KW-0689">Ribosomal protein</keyword>
<keyword id="KW-0694">RNA-binding</keyword>
<keyword id="KW-0699">rRNA-binding</keyword>
<protein>
    <recommendedName>
        <fullName evidence="1">Large ribosomal subunit protein bL21</fullName>
    </recommendedName>
    <alternativeName>
        <fullName evidence="2">50S ribosomal protein L21</fullName>
    </alternativeName>
</protein>
<sequence length="104" mass="11155">MSTYAIIKTGGKQVKVEVGQAIYVEKIDAEAGAEVTFNEVVLVGGDKTVVGTPVVEGATVVGTVEKQGKQKKVVTFKYKPKKGSHRKQGHRQPYTKVVINAINA</sequence>
<name>RL21_STRPM</name>